<keyword id="KW-1185">Reference proteome</keyword>
<keyword id="KW-0687">Ribonucleoprotein</keyword>
<keyword id="KW-0689">Ribosomal protein</keyword>
<comment type="function">
    <text evidence="1">Involved in the binding of tRNA to the ribosomes.</text>
</comment>
<comment type="subunit">
    <text evidence="1">Part of the 30S ribosomal subunit.</text>
</comment>
<comment type="similarity">
    <text evidence="1">Belongs to the universal ribosomal protein uS10 family.</text>
</comment>
<dbReference type="EMBL" id="AE017263">
    <property type="protein sequence ID" value="AAT75478.1"/>
    <property type="molecule type" value="Genomic_DNA"/>
</dbReference>
<dbReference type="RefSeq" id="WP_011183019.1">
    <property type="nucleotide sequence ID" value="NC_006055.1"/>
</dbReference>
<dbReference type="RefSeq" id="YP_053362.1">
    <property type="nucleotide sequence ID" value="NC_006055.1"/>
</dbReference>
<dbReference type="SMR" id="Q6F1Z5"/>
<dbReference type="STRING" id="265311.Mfl122"/>
<dbReference type="PaxDb" id="265311-Mfl122"/>
<dbReference type="EnsemblBacteria" id="AAT75478">
    <property type="protein sequence ID" value="AAT75478"/>
    <property type="gene ID" value="Mfl122"/>
</dbReference>
<dbReference type="GeneID" id="2898247"/>
<dbReference type="KEGG" id="mfl:Mfl122"/>
<dbReference type="PATRIC" id="fig|265311.5.peg.123"/>
<dbReference type="eggNOG" id="COG0051">
    <property type="taxonomic scope" value="Bacteria"/>
</dbReference>
<dbReference type="HOGENOM" id="CLU_122625_1_3_14"/>
<dbReference type="OrthoDB" id="9804464at2"/>
<dbReference type="Proteomes" id="UP000006647">
    <property type="component" value="Chromosome"/>
</dbReference>
<dbReference type="GO" id="GO:1990904">
    <property type="term" value="C:ribonucleoprotein complex"/>
    <property type="evidence" value="ECO:0007669"/>
    <property type="project" value="UniProtKB-KW"/>
</dbReference>
<dbReference type="GO" id="GO:0005840">
    <property type="term" value="C:ribosome"/>
    <property type="evidence" value="ECO:0007669"/>
    <property type="project" value="UniProtKB-KW"/>
</dbReference>
<dbReference type="GO" id="GO:0003735">
    <property type="term" value="F:structural constituent of ribosome"/>
    <property type="evidence" value="ECO:0007669"/>
    <property type="project" value="InterPro"/>
</dbReference>
<dbReference type="GO" id="GO:0000049">
    <property type="term" value="F:tRNA binding"/>
    <property type="evidence" value="ECO:0007669"/>
    <property type="project" value="UniProtKB-UniRule"/>
</dbReference>
<dbReference type="GO" id="GO:0006412">
    <property type="term" value="P:translation"/>
    <property type="evidence" value="ECO:0007669"/>
    <property type="project" value="UniProtKB-UniRule"/>
</dbReference>
<dbReference type="FunFam" id="3.30.70.600:FF:000003">
    <property type="entry name" value="30S ribosomal protein S10"/>
    <property type="match status" value="1"/>
</dbReference>
<dbReference type="Gene3D" id="3.30.70.600">
    <property type="entry name" value="Ribosomal protein S10 domain"/>
    <property type="match status" value="1"/>
</dbReference>
<dbReference type="HAMAP" id="MF_00508">
    <property type="entry name" value="Ribosomal_uS10"/>
    <property type="match status" value="1"/>
</dbReference>
<dbReference type="InterPro" id="IPR001848">
    <property type="entry name" value="Ribosomal_uS10"/>
</dbReference>
<dbReference type="InterPro" id="IPR018268">
    <property type="entry name" value="Ribosomal_uS10_CS"/>
</dbReference>
<dbReference type="InterPro" id="IPR027486">
    <property type="entry name" value="Ribosomal_uS10_dom"/>
</dbReference>
<dbReference type="InterPro" id="IPR036838">
    <property type="entry name" value="Ribosomal_uS10_dom_sf"/>
</dbReference>
<dbReference type="NCBIfam" id="NF001861">
    <property type="entry name" value="PRK00596.1"/>
    <property type="match status" value="1"/>
</dbReference>
<dbReference type="NCBIfam" id="TIGR01049">
    <property type="entry name" value="rpsJ_bact"/>
    <property type="match status" value="1"/>
</dbReference>
<dbReference type="PANTHER" id="PTHR11700">
    <property type="entry name" value="30S RIBOSOMAL PROTEIN S10 FAMILY MEMBER"/>
    <property type="match status" value="1"/>
</dbReference>
<dbReference type="Pfam" id="PF00338">
    <property type="entry name" value="Ribosomal_S10"/>
    <property type="match status" value="1"/>
</dbReference>
<dbReference type="PRINTS" id="PR00971">
    <property type="entry name" value="RIBOSOMALS10"/>
</dbReference>
<dbReference type="SMART" id="SM01403">
    <property type="entry name" value="Ribosomal_S10"/>
    <property type="match status" value="1"/>
</dbReference>
<dbReference type="SUPFAM" id="SSF54999">
    <property type="entry name" value="Ribosomal protein S10"/>
    <property type="match status" value="1"/>
</dbReference>
<dbReference type="PROSITE" id="PS00361">
    <property type="entry name" value="RIBOSOMAL_S10"/>
    <property type="match status" value="1"/>
</dbReference>
<sequence>MAEQKMRIKLKGYDHAIIDQSILKIIEAAEGTGAKVRGPIPLPTDKQVITILRAVHKYKDSREQFEMRTHKRLLEILNPTPTTMDVLKRVQLPSGVDIEIKL</sequence>
<accession>Q6F1Z5</accession>
<proteinExistence type="inferred from homology"/>
<protein>
    <recommendedName>
        <fullName evidence="1">Small ribosomal subunit protein uS10</fullName>
    </recommendedName>
    <alternativeName>
        <fullName evidence="2">30S ribosomal protein S10</fullName>
    </alternativeName>
</protein>
<feature type="chain" id="PRO_0000146549" description="Small ribosomal subunit protein uS10">
    <location>
        <begin position="1"/>
        <end position="102"/>
    </location>
</feature>
<name>RS10_MESFL</name>
<organism>
    <name type="scientific">Mesoplasma florum (strain ATCC 33453 / NBRC 100688 / NCTC 11704 / L1)</name>
    <name type="common">Acholeplasma florum</name>
    <dbReference type="NCBI Taxonomy" id="265311"/>
    <lineage>
        <taxon>Bacteria</taxon>
        <taxon>Bacillati</taxon>
        <taxon>Mycoplasmatota</taxon>
        <taxon>Mollicutes</taxon>
        <taxon>Entomoplasmatales</taxon>
        <taxon>Entomoplasmataceae</taxon>
        <taxon>Mesoplasma</taxon>
    </lineage>
</organism>
<gene>
    <name evidence="1" type="primary">rpsJ</name>
    <name type="ordered locus">Mfl122</name>
</gene>
<evidence type="ECO:0000255" key="1">
    <source>
        <dbReference type="HAMAP-Rule" id="MF_00508"/>
    </source>
</evidence>
<evidence type="ECO:0000305" key="2"/>
<reference key="1">
    <citation type="submission" date="2004-06" db="EMBL/GenBank/DDBJ databases">
        <authorList>
            <person name="Birren B.W."/>
            <person name="Stange-Thomann N."/>
            <person name="Hafez N."/>
            <person name="DeCaprio D."/>
            <person name="Fisher S."/>
            <person name="Butler J."/>
            <person name="Elkins T."/>
            <person name="Kodira C.D."/>
            <person name="Major J."/>
            <person name="Wang S."/>
            <person name="Nicol R."/>
            <person name="Nusbaum C."/>
        </authorList>
    </citation>
    <scope>NUCLEOTIDE SEQUENCE [LARGE SCALE GENOMIC DNA]</scope>
    <source>
        <strain>ATCC 33453 / NBRC 100688 / NCTC 11704 / L1</strain>
    </source>
</reference>